<reference key="1">
    <citation type="journal article" date="2006" name="Proc. Natl. Acad. Sci. U.S.A.">
        <title>Genome sequence of Synechococcus CC9311: insights into adaptation to a coastal environment.</title>
        <authorList>
            <person name="Palenik B."/>
            <person name="Ren Q."/>
            <person name="Dupont C.L."/>
            <person name="Myers G.S."/>
            <person name="Heidelberg J.F."/>
            <person name="Badger J.H."/>
            <person name="Madupu R."/>
            <person name="Nelson W.C."/>
            <person name="Brinkac L.M."/>
            <person name="Dodson R.J."/>
            <person name="Durkin A.S."/>
            <person name="Daugherty S.C."/>
            <person name="Sullivan S.A."/>
            <person name="Khouri H."/>
            <person name="Mohamoud Y."/>
            <person name="Halpin R."/>
            <person name="Paulsen I.T."/>
        </authorList>
    </citation>
    <scope>NUCLEOTIDE SEQUENCE [LARGE SCALE GENOMIC DNA]</scope>
    <source>
        <strain>CC9311</strain>
    </source>
</reference>
<comment type="subcellular location">
    <subcellularLocation>
        <location evidence="1">Cell membrane</location>
        <topology evidence="1">Multi-pass membrane protein</topology>
    </subcellularLocation>
</comment>
<comment type="similarity">
    <text evidence="1">Belongs to the UPF0182 family.</text>
</comment>
<name>Y1321_SYNS3</name>
<keyword id="KW-1003">Cell membrane</keyword>
<keyword id="KW-0472">Membrane</keyword>
<keyword id="KW-1185">Reference proteome</keyword>
<keyword id="KW-0812">Transmembrane</keyword>
<keyword id="KW-1133">Transmembrane helix</keyword>
<gene>
    <name type="ordered locus">sync_1321</name>
</gene>
<sequence>MAKIIWTIGRFGLLLIPLIVIISRLQVEWYWFDQFELGSVYGKRLLLQLGGALFAFLFVGSCALWRQSWLRPSESEKNERSPVLTGYRYGFCLLACLLVLLSVLAIDTRLAWLAWIEPFSLSYWWSLPFSTGWPLLSLSILMLTLIMFGLTRSRRLGLTQVYGSVCICLIVARSWGLWSLAFSIPNLGRVEPMLGSDVSFGLGRFSAIAFGLELVLLQLSLTLSTALWSRLTRSTCLSDWAFPGLTARQRHGLRPGFALVLMSFSGLMWLSRHQLLWTQDGIVAGAGWLDVHLLLPLRSLGSIALLVLAFVVLPSPFSSVRRRQLRLILAFIAIASFGLEMVLFPLMHWLVVRPRELQLERPYISRAIEATRHAYQLDAIETEPFDPSSRLSREDLRDGASTLRNIRLWDSQPLLATNRQLQQLRVYYRFTNAAVDRYQLRPELLERQQVILAARELDQAALPKRSRTWQNRHFVFTHGFGFTMSPVNSRGADGLPDYFISDIGSSERINGNKALDISRADVKKNVPIGRPALYFGMLPSPYAVAPTQIEEFDHPEGDVNTYNHYSGRAGIPLASFGQRIAASIYIRDPRLLNTGVLKPDSRLLLRRDVKKRVKALAPFLQLKGDPYLVSVPMESGLDQYHDDQHQYWIVDGFTSSNTYPYASTLPDGKEMRYLRNSVKAIVDAYNGTVHLYVSEPDDPMIRGWQKVFPELFQPLESMPTSLRQHLMVPSSMFELQVQQLLRYHVTDPRIFYSGDDVWQVPKELYGKTQIPVAPYHITAQLKRSLDSEFLLLQPLTPLARPNLSGWLAARSDADHYGELVLLRFPSDVPIFGPEQIQALINQNPEISQQFGLWDRAGSQVVQGNLLVVPLGNALLYVEPIYLRARRGGLPTLTRVVVSDGSRVAMANDLNTGLEALLQGSGSKDVVVQELDQSS</sequence>
<feature type="chain" id="PRO_0000291295" description="UPF0182 protein sync_1321">
    <location>
        <begin position="1"/>
        <end position="934"/>
    </location>
</feature>
<feature type="transmembrane region" description="Helical" evidence="1">
    <location>
        <begin position="2"/>
        <end position="22"/>
    </location>
</feature>
<feature type="transmembrane region" description="Helical" evidence="1">
    <location>
        <begin position="45"/>
        <end position="65"/>
    </location>
</feature>
<feature type="transmembrane region" description="Helical" evidence="1">
    <location>
        <begin position="86"/>
        <end position="106"/>
    </location>
</feature>
<feature type="transmembrane region" description="Helical" evidence="1">
    <location>
        <begin position="129"/>
        <end position="149"/>
    </location>
</feature>
<feature type="transmembrane region" description="Helical" evidence="1">
    <location>
        <begin position="165"/>
        <end position="185"/>
    </location>
</feature>
<feature type="transmembrane region" description="Helical" evidence="1">
    <location>
        <begin position="208"/>
        <end position="228"/>
    </location>
</feature>
<feature type="transmembrane region" description="Helical" evidence="1">
    <location>
        <begin position="251"/>
        <end position="271"/>
    </location>
</feature>
<feature type="transmembrane region" description="Helical" evidence="1">
    <location>
        <begin position="300"/>
        <end position="320"/>
    </location>
</feature>
<feature type="transmembrane region" description="Helical" evidence="1">
    <location>
        <begin position="327"/>
        <end position="347"/>
    </location>
</feature>
<proteinExistence type="inferred from homology"/>
<accession>Q0IAJ3</accession>
<organism>
    <name type="scientific">Synechococcus sp. (strain CC9311)</name>
    <dbReference type="NCBI Taxonomy" id="64471"/>
    <lineage>
        <taxon>Bacteria</taxon>
        <taxon>Bacillati</taxon>
        <taxon>Cyanobacteriota</taxon>
        <taxon>Cyanophyceae</taxon>
        <taxon>Synechococcales</taxon>
        <taxon>Synechococcaceae</taxon>
        <taxon>Synechococcus</taxon>
    </lineage>
</organism>
<protein>
    <recommendedName>
        <fullName evidence="1">UPF0182 protein sync_1321</fullName>
    </recommendedName>
</protein>
<evidence type="ECO:0000255" key="1">
    <source>
        <dbReference type="HAMAP-Rule" id="MF_01600"/>
    </source>
</evidence>
<dbReference type="EMBL" id="CP000435">
    <property type="protein sequence ID" value="ABI46448.1"/>
    <property type="molecule type" value="Genomic_DNA"/>
</dbReference>
<dbReference type="RefSeq" id="WP_011619249.1">
    <property type="nucleotide sequence ID" value="NC_008319.1"/>
</dbReference>
<dbReference type="STRING" id="64471.sync_1321"/>
<dbReference type="KEGG" id="syg:sync_1321"/>
<dbReference type="eggNOG" id="COG1615">
    <property type="taxonomic scope" value="Bacteria"/>
</dbReference>
<dbReference type="HOGENOM" id="CLU_007733_0_0_3"/>
<dbReference type="OrthoDB" id="9763654at2"/>
<dbReference type="Proteomes" id="UP000001961">
    <property type="component" value="Chromosome"/>
</dbReference>
<dbReference type="GO" id="GO:0005576">
    <property type="term" value="C:extracellular region"/>
    <property type="evidence" value="ECO:0007669"/>
    <property type="project" value="TreeGrafter"/>
</dbReference>
<dbReference type="GO" id="GO:0005886">
    <property type="term" value="C:plasma membrane"/>
    <property type="evidence" value="ECO:0007669"/>
    <property type="project" value="UniProtKB-SubCell"/>
</dbReference>
<dbReference type="HAMAP" id="MF_01600">
    <property type="entry name" value="UPF0182"/>
    <property type="match status" value="1"/>
</dbReference>
<dbReference type="InterPro" id="IPR005372">
    <property type="entry name" value="UPF0182"/>
</dbReference>
<dbReference type="PANTHER" id="PTHR39344">
    <property type="entry name" value="UPF0182 PROTEIN SLL1060"/>
    <property type="match status" value="1"/>
</dbReference>
<dbReference type="PANTHER" id="PTHR39344:SF1">
    <property type="entry name" value="UPF0182 PROTEIN SLL1060"/>
    <property type="match status" value="1"/>
</dbReference>
<dbReference type="Pfam" id="PF03699">
    <property type="entry name" value="UPF0182"/>
    <property type="match status" value="1"/>
</dbReference>